<name>CHM1B_DANRE</name>
<gene>
    <name type="primary">chmp1b</name>
    <name type="ORF">zgc:56134</name>
</gene>
<feature type="chain" id="PRO_0000211458" description="Charged multivesicular body protein 1b">
    <location>
        <begin position="1"/>
        <end position="199"/>
    </location>
</feature>
<feature type="region of interest" description="Disordered" evidence="3">
    <location>
        <begin position="167"/>
        <end position="199"/>
    </location>
</feature>
<feature type="coiled-coil region" evidence="2">
    <location>
        <begin position="10"/>
        <end position="30"/>
    </location>
</feature>
<feature type="coiled-coil region" evidence="2">
    <location>
        <begin position="178"/>
        <end position="199"/>
    </location>
</feature>
<feature type="short sequence motif" description="MIT-interacting motif">
    <location>
        <begin position="186"/>
        <end position="196"/>
    </location>
</feature>
<feature type="compositionally biased region" description="Polar residues" evidence="3">
    <location>
        <begin position="170"/>
        <end position="182"/>
    </location>
</feature>
<reference key="1">
    <citation type="journal article" date="2004" name="Proc. Natl. Acad. Sci. U.S.A.">
        <title>Hematopoietic gene expression profile in zebrafish kidney marrow.</title>
        <authorList>
            <person name="Song H.-D."/>
            <person name="Sun X.-J."/>
            <person name="Deng M."/>
            <person name="Zhang G.-W."/>
            <person name="Zhou Y."/>
            <person name="Wu X.-Y."/>
            <person name="Sheng Y."/>
            <person name="Chen Y."/>
            <person name="Ruan Z."/>
            <person name="Jiang C.-L."/>
            <person name="Fan H.-Y."/>
            <person name="Zon L.I."/>
            <person name="Kanki J.P."/>
            <person name="Liu T.X."/>
            <person name="Look A.T."/>
            <person name="Chen Z."/>
        </authorList>
    </citation>
    <scope>NUCLEOTIDE SEQUENCE [LARGE SCALE MRNA]</scope>
    <source>
        <tissue>Kidney marrow</tissue>
    </source>
</reference>
<reference key="2">
    <citation type="submission" date="2003-01" db="EMBL/GenBank/DDBJ databases">
        <authorList>
            <consortium name="NIH - Zebrafish Gene Collection (ZGC) project"/>
        </authorList>
    </citation>
    <scope>NUCLEOTIDE SEQUENCE [LARGE SCALE MRNA]</scope>
</reference>
<proteinExistence type="evidence at transcript level"/>
<accession>Q7ZVB1</accession>
<evidence type="ECO:0000250" key="1"/>
<evidence type="ECO:0000255" key="2"/>
<evidence type="ECO:0000256" key="3">
    <source>
        <dbReference type="SAM" id="MobiDB-lite"/>
    </source>
</evidence>
<evidence type="ECO:0000305" key="4"/>
<organism>
    <name type="scientific">Danio rerio</name>
    <name type="common">Zebrafish</name>
    <name type="synonym">Brachydanio rerio</name>
    <dbReference type="NCBI Taxonomy" id="7955"/>
    <lineage>
        <taxon>Eukaryota</taxon>
        <taxon>Metazoa</taxon>
        <taxon>Chordata</taxon>
        <taxon>Craniata</taxon>
        <taxon>Vertebrata</taxon>
        <taxon>Euteleostomi</taxon>
        <taxon>Actinopterygii</taxon>
        <taxon>Neopterygii</taxon>
        <taxon>Teleostei</taxon>
        <taxon>Ostariophysi</taxon>
        <taxon>Cypriniformes</taxon>
        <taxon>Danionidae</taxon>
        <taxon>Danioninae</taxon>
        <taxon>Danio</taxon>
    </lineage>
</organism>
<dbReference type="EMBL" id="AY398326">
    <property type="protein sequence ID" value="AAQ97759.1"/>
    <property type="molecule type" value="mRNA"/>
</dbReference>
<dbReference type="EMBL" id="BC045934">
    <property type="protein sequence ID" value="AAH45934.1"/>
    <property type="molecule type" value="mRNA"/>
</dbReference>
<dbReference type="EMBL" id="BC065462">
    <property type="protein sequence ID" value="AAH65462.1"/>
    <property type="molecule type" value="mRNA"/>
</dbReference>
<dbReference type="EMBL" id="BC067569">
    <property type="protein sequence ID" value="AAH67569.1"/>
    <property type="molecule type" value="mRNA"/>
</dbReference>
<dbReference type="RefSeq" id="NP_956308.1">
    <property type="nucleotide sequence ID" value="NM_200014.1"/>
</dbReference>
<dbReference type="RefSeq" id="XP_009299564.1">
    <property type="nucleotide sequence ID" value="XM_009301289.4"/>
</dbReference>
<dbReference type="SMR" id="Q7ZVB1"/>
<dbReference type="FunCoup" id="Q7ZVB1">
    <property type="interactions" value="1281"/>
</dbReference>
<dbReference type="STRING" id="7955.ENSDARP00000134015"/>
<dbReference type="Ensembl" id="ENSDART00000157900">
    <property type="protein sequence ID" value="ENSDARP00000141620"/>
    <property type="gene ID" value="ENSDARG00000110691"/>
</dbReference>
<dbReference type="Ensembl" id="ENSDART00000171199">
    <property type="protein sequence ID" value="ENSDARP00000134015"/>
    <property type="gene ID" value="ENSDARG00000099624"/>
</dbReference>
<dbReference type="GeneID" id="336426"/>
<dbReference type="KEGG" id="dre:336426"/>
<dbReference type="AGR" id="ZFIN:ZDB-GENE-030131-8370"/>
<dbReference type="CTD" id="57132"/>
<dbReference type="ZFIN" id="ZDB-GENE-030131-8370">
    <property type="gene designation" value="chmp1b"/>
</dbReference>
<dbReference type="HOGENOM" id="CLU_080826_0_1_1"/>
<dbReference type="InParanoid" id="Q7ZVB1"/>
<dbReference type="OMA" id="QQITMVM"/>
<dbReference type="OrthoDB" id="10266568at2759"/>
<dbReference type="PhylomeDB" id="Q7ZVB1"/>
<dbReference type="PRO" id="PR:Q7ZVB1"/>
<dbReference type="Proteomes" id="UP000000437">
    <property type="component" value="Alternate scaffold 5"/>
</dbReference>
<dbReference type="Proteomes" id="UP000000437">
    <property type="component" value="Chromosome 5"/>
</dbReference>
<dbReference type="Bgee" id="ENSDARG00000099624">
    <property type="expression patterns" value="Expressed in pharyngeal gill and 28 other cell types or tissues"/>
</dbReference>
<dbReference type="ExpressionAtlas" id="Q7ZVB1">
    <property type="expression patterns" value="baseline and differential"/>
</dbReference>
<dbReference type="GO" id="GO:0005829">
    <property type="term" value="C:cytosol"/>
    <property type="evidence" value="ECO:0007669"/>
    <property type="project" value="UniProtKB-SubCell"/>
</dbReference>
<dbReference type="GO" id="GO:0000815">
    <property type="term" value="C:ESCRT III complex"/>
    <property type="evidence" value="ECO:0000318"/>
    <property type="project" value="GO_Central"/>
</dbReference>
<dbReference type="GO" id="GO:0031902">
    <property type="term" value="C:late endosome membrane"/>
    <property type="evidence" value="ECO:0007669"/>
    <property type="project" value="UniProtKB-SubCell"/>
</dbReference>
<dbReference type="GO" id="GO:0005771">
    <property type="term" value="C:multivesicular body"/>
    <property type="evidence" value="ECO:0000318"/>
    <property type="project" value="GO_Central"/>
</dbReference>
<dbReference type="GO" id="GO:0032509">
    <property type="term" value="P:endosome transport via multivesicular body sorting pathway"/>
    <property type="evidence" value="ECO:0000318"/>
    <property type="project" value="GO_Central"/>
</dbReference>
<dbReference type="GO" id="GO:0045324">
    <property type="term" value="P:late endosome to vacuole transport"/>
    <property type="evidence" value="ECO:0000318"/>
    <property type="project" value="GO_Central"/>
</dbReference>
<dbReference type="GO" id="GO:0015031">
    <property type="term" value="P:protein transport"/>
    <property type="evidence" value="ECO:0000318"/>
    <property type="project" value="GO_Central"/>
</dbReference>
<dbReference type="Gene3D" id="6.10.140.1230">
    <property type="match status" value="1"/>
</dbReference>
<dbReference type="InterPro" id="IPR005024">
    <property type="entry name" value="Snf7_fam"/>
</dbReference>
<dbReference type="PANTHER" id="PTHR10476">
    <property type="entry name" value="CHARGED MULTIVESICULAR BODY PROTEIN"/>
    <property type="match status" value="1"/>
</dbReference>
<dbReference type="Pfam" id="PF03357">
    <property type="entry name" value="Snf7"/>
    <property type="match status" value="1"/>
</dbReference>
<protein>
    <recommendedName>
        <fullName>Charged multivesicular body protein 1b</fullName>
    </recommendedName>
    <alternativeName>
        <fullName>Chromatin-modifying protein 1b</fullName>
        <shortName>CHMP1b</shortName>
    </alternativeName>
</protein>
<keyword id="KW-0175">Coiled coil</keyword>
<keyword id="KW-0963">Cytoplasm</keyword>
<keyword id="KW-0967">Endosome</keyword>
<keyword id="KW-0472">Membrane</keyword>
<keyword id="KW-0653">Protein transport</keyword>
<keyword id="KW-1185">Reference proteome</keyword>
<keyword id="KW-0813">Transport</keyword>
<comment type="function">
    <text>Probable peripherally associated component of the endosomal sorting required for transport complex III (ESCRT-III) which is involved in multivesicular bodies (MVBs) formation and sorting of endosomal cargo proteins into MVBs. MVBs contain intraluminal vesicles (ILVs) that are generated by invagination and scission from the limiting membrane of the endosome and mostly are delivered to lysosomes enabling degradation of membrane proteins, such as stimulated growth factor receptors, lysosomal enzymes and lipids.</text>
</comment>
<comment type="subunit">
    <text>Probable peripherally associated component of the endosomal sorting required for transport complex III (ESCRT-III).</text>
</comment>
<comment type="subcellular location">
    <subcellularLocation>
        <location evidence="1">Cytoplasm</location>
        <location evidence="1">Cytosol</location>
    </subcellularLocation>
    <subcellularLocation>
        <location evidence="1">Endosome</location>
    </subcellularLocation>
    <subcellularLocation>
        <location evidence="1">Late endosome membrane</location>
        <topology evidence="1">Peripheral membrane protein</topology>
    </subcellularLocation>
</comment>
<comment type="similarity">
    <text evidence="4">Belongs to the SNF7 family.</text>
</comment>
<sequence length="199" mass="22063">MSSMEKHLFNLKFAAKELQRNSKKCDKEEKAEKVKVKKAIQKGNMEVARIHAENAIRQKNQSVNFLRMSARVDAVAARVQTAVTMNQVTKSMAGVVKGMDATLKSMNLEKISGLMEKFERQFETLDVQTAQMEDSMSSTTTLTTPQGQVDTLMMEMADEAGLDLNMELPQGQTGSVGTSVASAEQDELSQRLAKLRDQV</sequence>